<evidence type="ECO:0000255" key="1"/>
<evidence type="ECO:0000255" key="2">
    <source>
        <dbReference type="HAMAP-Rule" id="MF_01260"/>
    </source>
</evidence>
<evidence type="ECO:0000305" key="3"/>
<organism>
    <name type="scientific">Vibrio vulnificus (strain YJ016)</name>
    <dbReference type="NCBI Taxonomy" id="196600"/>
    <lineage>
        <taxon>Bacteria</taxon>
        <taxon>Pseudomonadati</taxon>
        <taxon>Pseudomonadota</taxon>
        <taxon>Gammaproteobacteria</taxon>
        <taxon>Vibrionales</taxon>
        <taxon>Vibrionaceae</taxon>
        <taxon>Vibrio</taxon>
    </lineage>
</organism>
<feature type="chain" id="PRO_0000204499" description="Pimeloyl-[acyl-carrier protein] methyl ester esterase">
    <location>
        <begin position="1"/>
        <end position="255"/>
    </location>
</feature>
<feature type="domain" description="AB hydrolase-1" evidence="1">
    <location>
        <begin position="16"/>
        <end position="242"/>
    </location>
</feature>
<feature type="active site" description="Nucleophile" evidence="2">
    <location>
        <position position="82"/>
    </location>
</feature>
<feature type="active site" evidence="2">
    <location>
        <position position="207"/>
    </location>
</feature>
<feature type="active site" evidence="2">
    <location>
        <position position="235"/>
    </location>
</feature>
<feature type="binding site" evidence="2">
    <location>
        <position position="22"/>
    </location>
    <ligand>
        <name>substrate</name>
    </ligand>
</feature>
<feature type="binding site" evidence="2">
    <location>
        <begin position="82"/>
        <end position="83"/>
    </location>
    <ligand>
        <name>substrate</name>
    </ligand>
</feature>
<feature type="binding site" evidence="2">
    <location>
        <begin position="143"/>
        <end position="147"/>
    </location>
    <ligand>
        <name>substrate</name>
    </ligand>
</feature>
<feature type="binding site" evidence="2">
    <location>
        <position position="235"/>
    </location>
    <ligand>
        <name>substrate</name>
    </ligand>
</feature>
<reference key="1">
    <citation type="journal article" date="2003" name="Genome Res.">
        <title>Comparative genome analysis of Vibrio vulnificus, a marine pathogen.</title>
        <authorList>
            <person name="Chen C.-Y."/>
            <person name="Wu K.-M."/>
            <person name="Chang Y.-C."/>
            <person name="Chang C.-H."/>
            <person name="Tsai H.-C."/>
            <person name="Liao T.-L."/>
            <person name="Liu Y.-M."/>
            <person name="Chen H.-J."/>
            <person name="Shen A.B.-T."/>
            <person name="Li J.-C."/>
            <person name="Su T.-L."/>
            <person name="Shao C.-P."/>
            <person name="Lee C.-T."/>
            <person name="Hor L.-I."/>
            <person name="Tsai S.-F."/>
        </authorList>
    </citation>
    <scope>NUCLEOTIDE SEQUENCE [LARGE SCALE GENOMIC DNA]</scope>
    <source>
        <strain>YJ016</strain>
    </source>
</reference>
<comment type="function">
    <text evidence="2">The physiological role of BioH is to remove the methyl group introduced by BioC when the pimeloyl moiety is complete. It allows to synthesize pimeloyl-ACP via the fatty acid synthetic pathway through the hydrolysis of the ester bonds of pimeloyl-ACP esters.</text>
</comment>
<comment type="catalytic activity">
    <reaction evidence="2">
        <text>6-carboxyhexanoyl-[ACP] methyl ester + H2O = 6-carboxyhexanoyl-[ACP] + methanol + H(+)</text>
        <dbReference type="Rhea" id="RHEA:42700"/>
        <dbReference type="Rhea" id="RHEA-COMP:9955"/>
        <dbReference type="Rhea" id="RHEA-COMP:10186"/>
        <dbReference type="ChEBI" id="CHEBI:15377"/>
        <dbReference type="ChEBI" id="CHEBI:15378"/>
        <dbReference type="ChEBI" id="CHEBI:17790"/>
        <dbReference type="ChEBI" id="CHEBI:78846"/>
        <dbReference type="ChEBI" id="CHEBI:82735"/>
        <dbReference type="EC" id="3.1.1.85"/>
    </reaction>
</comment>
<comment type="pathway">
    <text evidence="2">Cofactor biosynthesis; biotin biosynthesis.</text>
</comment>
<comment type="subunit">
    <text evidence="2">Monomer.</text>
</comment>
<comment type="subcellular location">
    <subcellularLocation>
        <location evidence="2">Cytoplasm</location>
    </subcellularLocation>
</comment>
<comment type="similarity">
    <text evidence="2">Belongs to the AB hydrolase superfamily. Carboxylesterase BioH family.</text>
</comment>
<comment type="sequence caution" evidence="3">
    <conflict type="erroneous initiation">
        <sequence resource="EMBL-CDS" id="BAC92995"/>
    </conflict>
</comment>
<sequence>MSTDLHWQTQGQGPDLVLLHGWGMNGAVWQQVVERLEPHFRLHVVDLPGYGHSAHLHAASLEEIAQQLLEHAPKQAIWVGWSLGGLVATHMALHHADYVSKLVTVASSPKFAAEARWRGIQPQVLSAFTEQLSEDFHITVERFMALQAMGSPSARQDVKNLKQAVFSRPQPNPQSLLAGLQMLAEVDLRDHLPHLTMPMLRLYGRLDGLVPIKVAQDLEKALPASEQFIFTQSSHAPFITEPESFCHQLLSFAGK</sequence>
<gene>
    <name evidence="2" type="primary">bioH</name>
    <name type="ordered locus">VV0230</name>
</gene>
<accession>Q7MPY0</accession>
<proteinExistence type="inferred from homology"/>
<keyword id="KW-0093">Biotin biosynthesis</keyword>
<keyword id="KW-0963">Cytoplasm</keyword>
<keyword id="KW-0378">Hydrolase</keyword>
<keyword id="KW-0719">Serine esterase</keyword>
<name>BIOH_VIBVY</name>
<protein>
    <recommendedName>
        <fullName evidence="2">Pimeloyl-[acyl-carrier protein] methyl ester esterase</fullName>
        <ecNumber evidence="2">3.1.1.85</ecNumber>
    </recommendedName>
    <alternativeName>
        <fullName evidence="2">Biotin synthesis protein BioH</fullName>
    </alternativeName>
    <alternativeName>
        <fullName evidence="2">Carboxylesterase BioH</fullName>
    </alternativeName>
</protein>
<dbReference type="EC" id="3.1.1.85" evidence="2"/>
<dbReference type="EMBL" id="BA000037">
    <property type="protein sequence ID" value="BAC92995.1"/>
    <property type="status" value="ALT_INIT"/>
    <property type="molecule type" value="Genomic_DNA"/>
</dbReference>
<dbReference type="RefSeq" id="WP_043877025.1">
    <property type="nucleotide sequence ID" value="NC_005139.1"/>
</dbReference>
<dbReference type="SMR" id="Q7MPY0"/>
<dbReference type="STRING" id="672.VV93_v1c02110"/>
<dbReference type="ESTHER" id="vibvu-VV10862">
    <property type="family name" value="BioH"/>
</dbReference>
<dbReference type="KEGG" id="vvy:VV0230"/>
<dbReference type="PATRIC" id="fig|196600.6.peg.269"/>
<dbReference type="eggNOG" id="COG0596">
    <property type="taxonomic scope" value="Bacteria"/>
</dbReference>
<dbReference type="HOGENOM" id="CLU_020336_12_2_6"/>
<dbReference type="UniPathway" id="UPA00078"/>
<dbReference type="Proteomes" id="UP000002675">
    <property type="component" value="Chromosome I"/>
</dbReference>
<dbReference type="GO" id="GO:0005737">
    <property type="term" value="C:cytoplasm"/>
    <property type="evidence" value="ECO:0007669"/>
    <property type="project" value="UniProtKB-SubCell"/>
</dbReference>
<dbReference type="GO" id="GO:0016020">
    <property type="term" value="C:membrane"/>
    <property type="evidence" value="ECO:0007669"/>
    <property type="project" value="TreeGrafter"/>
</dbReference>
<dbReference type="GO" id="GO:0090499">
    <property type="term" value="F:pimelyl-[acyl-carrier protein] methyl ester esterase activity"/>
    <property type="evidence" value="ECO:0007669"/>
    <property type="project" value="UniProtKB-EC"/>
</dbReference>
<dbReference type="GO" id="GO:0009102">
    <property type="term" value="P:biotin biosynthetic process"/>
    <property type="evidence" value="ECO:0007669"/>
    <property type="project" value="UniProtKB-UniRule"/>
</dbReference>
<dbReference type="Gene3D" id="3.40.50.1820">
    <property type="entry name" value="alpha/beta hydrolase"/>
    <property type="match status" value="1"/>
</dbReference>
<dbReference type="HAMAP" id="MF_01260">
    <property type="entry name" value="Carboxylester"/>
    <property type="match status" value="1"/>
</dbReference>
<dbReference type="InterPro" id="IPR000073">
    <property type="entry name" value="AB_hydrolase_1"/>
</dbReference>
<dbReference type="InterPro" id="IPR029058">
    <property type="entry name" value="AB_hydrolase_fold"/>
</dbReference>
<dbReference type="InterPro" id="IPR050266">
    <property type="entry name" value="AB_hydrolase_sf"/>
</dbReference>
<dbReference type="InterPro" id="IPR010076">
    <property type="entry name" value="BioH"/>
</dbReference>
<dbReference type="NCBIfam" id="TIGR01738">
    <property type="entry name" value="bioH"/>
    <property type="match status" value="1"/>
</dbReference>
<dbReference type="PANTHER" id="PTHR43798:SF31">
    <property type="entry name" value="AB HYDROLASE SUPERFAMILY PROTEIN YCLE"/>
    <property type="match status" value="1"/>
</dbReference>
<dbReference type="PANTHER" id="PTHR43798">
    <property type="entry name" value="MONOACYLGLYCEROL LIPASE"/>
    <property type="match status" value="1"/>
</dbReference>
<dbReference type="Pfam" id="PF00561">
    <property type="entry name" value="Abhydrolase_1"/>
    <property type="match status" value="1"/>
</dbReference>
<dbReference type="SUPFAM" id="SSF53474">
    <property type="entry name" value="alpha/beta-Hydrolases"/>
    <property type="match status" value="1"/>
</dbReference>